<dbReference type="EC" id="2.7.11.1"/>
<dbReference type="EMBL" id="M96854">
    <property type="status" value="NOT_ANNOTATED_CDS"/>
    <property type="molecule type" value="Genomic_DNA"/>
</dbReference>
<dbReference type="PIR" id="B42745">
    <property type="entry name" value="TVMVMU"/>
</dbReference>
<dbReference type="SMR" id="P32593"/>
<dbReference type="BRENDA" id="2.7.10.2">
    <property type="organism ID" value="3394"/>
</dbReference>
<dbReference type="GO" id="GO:0005524">
    <property type="term" value="F:ATP binding"/>
    <property type="evidence" value="ECO:0007669"/>
    <property type="project" value="UniProtKB-KW"/>
</dbReference>
<dbReference type="GO" id="GO:0106310">
    <property type="term" value="F:protein serine kinase activity"/>
    <property type="evidence" value="ECO:0007669"/>
    <property type="project" value="RHEA"/>
</dbReference>
<dbReference type="GO" id="GO:0004674">
    <property type="term" value="F:protein serine/threonine kinase activity"/>
    <property type="evidence" value="ECO:0007669"/>
    <property type="project" value="UniProtKB-KW"/>
</dbReference>
<dbReference type="CDD" id="cd13979">
    <property type="entry name" value="STKc_Mos"/>
    <property type="match status" value="1"/>
</dbReference>
<dbReference type="FunFam" id="1.10.510.10:FF:000490">
    <property type="entry name" value="Proto-oncogene serine/threonine-protein kinase mos"/>
    <property type="match status" value="1"/>
</dbReference>
<dbReference type="FunFam" id="3.30.200.20:FF:000316">
    <property type="entry name" value="Proto-oncogene serine/threonine-protein kinase mos"/>
    <property type="match status" value="1"/>
</dbReference>
<dbReference type="Gene3D" id="3.30.200.20">
    <property type="entry name" value="Phosphorylase Kinase, domain 1"/>
    <property type="match status" value="1"/>
</dbReference>
<dbReference type="Gene3D" id="1.10.510.10">
    <property type="entry name" value="Transferase(Phosphotransferase) domain 1"/>
    <property type="match status" value="1"/>
</dbReference>
<dbReference type="InterPro" id="IPR011009">
    <property type="entry name" value="Kinase-like_dom_sf"/>
</dbReference>
<dbReference type="InterPro" id="IPR000719">
    <property type="entry name" value="Prot_kinase_dom"/>
</dbReference>
<dbReference type="InterPro" id="IPR017441">
    <property type="entry name" value="Protein_kinase_ATP_BS"/>
</dbReference>
<dbReference type="InterPro" id="IPR008271">
    <property type="entry name" value="Ser/Thr_kinase_AS"/>
</dbReference>
<dbReference type="InterPro" id="IPR051681">
    <property type="entry name" value="Ser/Thr_Kinases-Pseudokinases"/>
</dbReference>
<dbReference type="PANTHER" id="PTHR44329">
    <property type="entry name" value="SERINE/THREONINE-PROTEIN KINASE TNNI3K-RELATED"/>
    <property type="match status" value="1"/>
</dbReference>
<dbReference type="PANTHER" id="PTHR44329:SF285">
    <property type="entry name" value="V-MOS MOLONEY MURINE SARCOMA VIRAL ONCO HOMOLOG"/>
    <property type="match status" value="1"/>
</dbReference>
<dbReference type="Pfam" id="PF00069">
    <property type="entry name" value="Pkinase"/>
    <property type="match status" value="1"/>
</dbReference>
<dbReference type="SMART" id="SM00220">
    <property type="entry name" value="S_TKc"/>
    <property type="match status" value="1"/>
</dbReference>
<dbReference type="SUPFAM" id="SSF56112">
    <property type="entry name" value="Protein kinase-like (PK-like)"/>
    <property type="match status" value="1"/>
</dbReference>
<dbReference type="PROSITE" id="PS00107">
    <property type="entry name" value="PROTEIN_KINASE_ATP"/>
    <property type="match status" value="1"/>
</dbReference>
<dbReference type="PROSITE" id="PS50011">
    <property type="entry name" value="PROTEIN_KINASE_DOM"/>
    <property type="match status" value="1"/>
</dbReference>
<dbReference type="PROSITE" id="PS00108">
    <property type="entry name" value="PROTEIN_KINASE_ST"/>
    <property type="match status" value="1"/>
</dbReference>
<sequence>VSHVTVPSEGVMPSPLSLCRYLPRELSPSVDSRSCSIPLVAPRKAGKLFLGTTPPRAPGLPRRLAWFSIDWEQVCLMHRLGSGGFGSVYKATYHGVPVAIKQVNKCTEDLRASQRSFWAELNIAGLRHDNIVRVVAASTRTPEDSNSLGTIIMEFGGNVTLHQVIYDATRSPEPLSCRKQLSLGKCLKYSLDVVNGLLFLHSQSILHLDLKPANILISEQDVCKISDFGCSQKLQVLRGRQASPPHIGGTYTHQAPEILKGEIATPKADIYSFGITLWQMTTREVPYSGEPQYVQYAVVAYNLRPSLAGAVFTASLTGKALQNIIQSCWEARGLQRPSAELLQRDLKAFRGTLG</sequence>
<name>MOS_MSVMT</name>
<organism>
    <name type="scientific">Moloney murine sarcoma virus (strain ts110)</name>
    <name type="common">MoMSV</name>
    <dbReference type="NCBI Taxonomy" id="31691"/>
    <lineage>
        <taxon>Viruses</taxon>
        <taxon>Riboviria</taxon>
        <taxon>Pararnavirae</taxon>
        <taxon>Artverviricota</taxon>
        <taxon>Revtraviricetes</taxon>
        <taxon>Ortervirales</taxon>
        <taxon>Retroviridae</taxon>
        <taxon>Orthoretrovirinae</taxon>
        <taxon>Gammaretrovirus</taxon>
        <taxon>Moloney murine sarcoma virus</taxon>
    </lineage>
</organism>
<keyword id="KW-0067">ATP-binding</keyword>
<keyword id="KW-0418">Kinase</keyword>
<keyword id="KW-0547">Nucleotide-binding</keyword>
<keyword id="KW-0553">Oncogene</keyword>
<keyword id="KW-0723">Serine/threonine-protein kinase</keyword>
<keyword id="KW-0808">Transferase</keyword>
<gene>
    <name type="primary">V-MOS</name>
</gene>
<evidence type="ECO:0000255" key="1">
    <source>
        <dbReference type="PROSITE-ProRule" id="PRU00159"/>
    </source>
</evidence>
<evidence type="ECO:0000255" key="2">
    <source>
        <dbReference type="PROSITE-ProRule" id="PRU10027"/>
    </source>
</evidence>
<accession>P32593</accession>
<protein>
    <recommendedName>
        <fullName>Serine/threonine-protein kinase-transforming protein mos</fullName>
        <ecNumber>2.7.11.1</ecNumber>
    </recommendedName>
</protein>
<comment type="catalytic activity">
    <reaction>
        <text>L-seryl-[protein] + ATP = O-phospho-L-seryl-[protein] + ADP + H(+)</text>
        <dbReference type="Rhea" id="RHEA:17989"/>
        <dbReference type="Rhea" id="RHEA-COMP:9863"/>
        <dbReference type="Rhea" id="RHEA-COMP:11604"/>
        <dbReference type="ChEBI" id="CHEBI:15378"/>
        <dbReference type="ChEBI" id="CHEBI:29999"/>
        <dbReference type="ChEBI" id="CHEBI:30616"/>
        <dbReference type="ChEBI" id="CHEBI:83421"/>
        <dbReference type="ChEBI" id="CHEBI:456216"/>
        <dbReference type="EC" id="2.7.11.1"/>
    </reaction>
</comment>
<comment type="catalytic activity">
    <reaction>
        <text>L-threonyl-[protein] + ATP = O-phospho-L-threonyl-[protein] + ADP + H(+)</text>
        <dbReference type="Rhea" id="RHEA:46608"/>
        <dbReference type="Rhea" id="RHEA-COMP:11060"/>
        <dbReference type="Rhea" id="RHEA-COMP:11605"/>
        <dbReference type="ChEBI" id="CHEBI:15378"/>
        <dbReference type="ChEBI" id="CHEBI:30013"/>
        <dbReference type="ChEBI" id="CHEBI:30616"/>
        <dbReference type="ChEBI" id="CHEBI:61977"/>
        <dbReference type="ChEBI" id="CHEBI:456216"/>
        <dbReference type="EC" id="2.7.11.1"/>
    </reaction>
</comment>
<comment type="miscellaneous">
    <text>This protein is probably translated as a Gag-Mos polyprotein.</text>
</comment>
<comment type="similarity">
    <text evidence="1">Belongs to the protein kinase superfamily. Ser/Thr protein kinase family.</text>
</comment>
<reference key="1">
    <citation type="journal article" date="1992" name="J. Virol.">
        <title>Moloney murine sarcoma virus MuSVts110 DNA: cloning, nucleotide sequence, and gene expression.</title>
        <authorList>
            <person name="Huai L."/>
            <person name="Chiocca S.M."/>
            <person name="Gilbreth M.A."/>
            <person name="Ainsworth J.R."/>
            <person name="Bishop L.A."/>
            <person name="Murphy E.C. Jr."/>
        </authorList>
    </citation>
    <scope>NUCLEOTIDE SEQUENCE [GENOMIC DNA]</scope>
</reference>
<proteinExistence type="inferred from homology"/>
<organismHost>
    <name type="scientific">Mus musculus</name>
    <name type="common">Mouse</name>
    <dbReference type="NCBI Taxonomy" id="10090"/>
</organismHost>
<feature type="chain" id="PRO_0000086362" description="Serine/threonine-protein kinase-transforming protein mos">
    <location>
        <begin position="1"/>
        <end position="354"/>
    </location>
</feature>
<feature type="domain" description="Protein kinase" evidence="1">
    <location>
        <begin position="74"/>
        <end position="350"/>
    </location>
</feature>
<feature type="active site" description="Proton acceptor" evidence="1 2">
    <location>
        <position position="209"/>
    </location>
</feature>
<feature type="binding site" evidence="1">
    <location>
        <begin position="80"/>
        <end position="88"/>
    </location>
    <ligand>
        <name>ATP</name>
        <dbReference type="ChEBI" id="CHEBI:30616"/>
    </ligand>
</feature>
<feature type="binding site" evidence="1">
    <location>
        <position position="101"/>
    </location>
    <ligand>
        <name>ATP</name>
        <dbReference type="ChEBI" id="CHEBI:30616"/>
    </ligand>
</feature>